<sequence>MFKNRKSIAILIAAVSITMIGFSYGSVPLYRIFCQVTGFGGTTQVADLESDILTLKDEQQENRIITVRFNGDVSDTMPWKFHPIQQEIKVMVGETALAFYSAENPTDSSIIGISTYNVNPQQAGIYFNKIQCFCFEEQRLKPHETIDMPVFFFIDPAILDDPKMSDIDSITLSYTFFNVEDL</sequence>
<name>COXZ_RECAM</name>
<evidence type="ECO:0000250" key="1"/>
<evidence type="ECO:0000255" key="2"/>
<evidence type="ECO:0000305" key="3"/>
<accession>O21243</accession>
<gene>
    <name type="primary">CTAG</name>
</gene>
<geneLocation type="mitochondrion"/>
<protein>
    <recommendedName>
        <fullName>Cytochrome c oxidase assembly protein ctaG</fullName>
    </recommendedName>
</protein>
<feature type="chain" id="PRO_0000206030" description="Cytochrome c oxidase assembly protein ctaG">
    <location>
        <begin position="1"/>
        <end position="182"/>
    </location>
</feature>
<feature type="topological domain" description="Mitochondrial matrix" evidence="2">
    <location>
        <begin position="1"/>
        <end position="7"/>
    </location>
</feature>
<feature type="transmembrane region" description="Helical" evidence="2">
    <location>
        <begin position="8"/>
        <end position="28"/>
    </location>
</feature>
<feature type="topological domain" description="Mitochondrial intermembrane" evidence="2">
    <location>
        <begin position="29"/>
        <end position="182"/>
    </location>
</feature>
<dbReference type="EMBL" id="AF007261">
    <property type="protein sequence ID" value="AAD11870.1"/>
    <property type="molecule type" value="Genomic_DNA"/>
</dbReference>
<dbReference type="PIR" id="S78137">
    <property type="entry name" value="S78137"/>
</dbReference>
<dbReference type="SMR" id="O21243"/>
<dbReference type="GO" id="GO:0005743">
    <property type="term" value="C:mitochondrial inner membrane"/>
    <property type="evidence" value="ECO:0007669"/>
    <property type="project" value="UniProtKB-SubCell"/>
</dbReference>
<dbReference type="GO" id="GO:0005507">
    <property type="term" value="F:copper ion binding"/>
    <property type="evidence" value="ECO:0007669"/>
    <property type="project" value="InterPro"/>
</dbReference>
<dbReference type="FunFam" id="2.60.370.10:FF:000001">
    <property type="entry name" value="COX11 cytochrome c oxidase assembly homolog"/>
    <property type="match status" value="1"/>
</dbReference>
<dbReference type="Gene3D" id="2.60.370.10">
    <property type="entry name" value="Ctag/Cox11"/>
    <property type="match status" value="1"/>
</dbReference>
<dbReference type="HAMAP" id="MF_00155">
    <property type="entry name" value="CtaG"/>
    <property type="match status" value="1"/>
</dbReference>
<dbReference type="InterPro" id="IPR023471">
    <property type="entry name" value="CtaG/Cox11_dom_sf"/>
</dbReference>
<dbReference type="InterPro" id="IPR007533">
    <property type="entry name" value="Cyt_c_oxidase_assmbl_CtaG"/>
</dbReference>
<dbReference type="NCBIfam" id="NF003465">
    <property type="entry name" value="PRK05089.1"/>
    <property type="match status" value="1"/>
</dbReference>
<dbReference type="PANTHER" id="PTHR21320:SF3">
    <property type="entry name" value="CYTOCHROME C OXIDASE ASSEMBLY PROTEIN COX11, MITOCHONDRIAL-RELATED"/>
    <property type="match status" value="1"/>
</dbReference>
<dbReference type="PANTHER" id="PTHR21320">
    <property type="entry name" value="CYTOCHROME C OXIDASE ASSEMBLY PROTEIN COX11-RELATED"/>
    <property type="match status" value="1"/>
</dbReference>
<dbReference type="Pfam" id="PF04442">
    <property type="entry name" value="CtaG_Cox11"/>
    <property type="match status" value="1"/>
</dbReference>
<dbReference type="PIRSF" id="PIRSF005413">
    <property type="entry name" value="COX11"/>
    <property type="match status" value="1"/>
</dbReference>
<dbReference type="SUPFAM" id="SSF110111">
    <property type="entry name" value="Ctag/Cox11"/>
    <property type="match status" value="1"/>
</dbReference>
<organism>
    <name type="scientific">Reclinomonas americana</name>
    <dbReference type="NCBI Taxonomy" id="48483"/>
    <lineage>
        <taxon>Eukaryota</taxon>
        <taxon>Discoba</taxon>
        <taxon>Jakobida</taxon>
        <taxon>Histionina</taxon>
        <taxon>Histionidae</taxon>
        <taxon>Reclinomonas</taxon>
    </lineage>
</organism>
<proteinExistence type="inferred from homology"/>
<reference key="1">
    <citation type="journal article" date="1997" name="Nature">
        <title>An ancestral mitochondrial DNA resembling a eubacterial genome in miniature.</title>
        <authorList>
            <person name="Lang B.F."/>
            <person name="Burger G."/>
            <person name="O'Kelly C.J."/>
            <person name="Cedergren R."/>
            <person name="Golding G.B."/>
            <person name="Lemieux C."/>
            <person name="Sankoff D."/>
            <person name="Turmel M."/>
            <person name="Gray M.W."/>
        </authorList>
    </citation>
    <scope>NUCLEOTIDE SEQUENCE [GENOMIC DNA]</scope>
    <source>
        <strain>ATCC 50394</strain>
    </source>
</reference>
<comment type="function">
    <text evidence="1">Exerts its effect at some terminal stage of cytochrome c oxidase synthesis, probably by being involved in the insertion of the copper B into subunit I.</text>
</comment>
<comment type="subcellular location">
    <subcellularLocation>
        <location evidence="1">Mitochondrion inner membrane</location>
        <topology evidence="1">Single-pass membrane protein</topology>
        <orientation evidence="1">Intermembrane side</orientation>
    </subcellularLocation>
</comment>
<comment type="similarity">
    <text evidence="3">Belongs to the COX11/CtaG family.</text>
</comment>
<keyword id="KW-0186">Copper</keyword>
<keyword id="KW-0472">Membrane</keyword>
<keyword id="KW-0496">Mitochondrion</keyword>
<keyword id="KW-0999">Mitochondrion inner membrane</keyword>
<keyword id="KW-0812">Transmembrane</keyword>
<keyword id="KW-1133">Transmembrane helix</keyword>